<accession>Q6D6F7</accession>
<organism>
    <name type="scientific">Pectobacterium atrosepticum (strain SCRI 1043 / ATCC BAA-672)</name>
    <name type="common">Erwinia carotovora subsp. atroseptica</name>
    <dbReference type="NCBI Taxonomy" id="218491"/>
    <lineage>
        <taxon>Bacteria</taxon>
        <taxon>Pseudomonadati</taxon>
        <taxon>Pseudomonadota</taxon>
        <taxon>Gammaproteobacteria</taxon>
        <taxon>Enterobacterales</taxon>
        <taxon>Pectobacteriaceae</taxon>
        <taxon>Pectobacterium</taxon>
    </lineage>
</organism>
<dbReference type="EMBL" id="BX950851">
    <property type="protein sequence ID" value="CAG74633.1"/>
    <property type="molecule type" value="Genomic_DNA"/>
</dbReference>
<dbReference type="RefSeq" id="WP_011093305.1">
    <property type="nucleotide sequence ID" value="NC_004547.2"/>
</dbReference>
<dbReference type="SMR" id="Q6D6F7"/>
<dbReference type="STRING" id="218491.ECA1728"/>
<dbReference type="GeneID" id="57209560"/>
<dbReference type="KEGG" id="eca:ECA1728"/>
<dbReference type="PATRIC" id="fig|218491.5.peg.1754"/>
<dbReference type="eggNOG" id="ENOG5032ZV7">
    <property type="taxonomic scope" value="Bacteria"/>
</dbReference>
<dbReference type="HOGENOM" id="CLU_155793_1_0_6"/>
<dbReference type="OrthoDB" id="6494117at2"/>
<dbReference type="Proteomes" id="UP000007966">
    <property type="component" value="Chromosome"/>
</dbReference>
<dbReference type="GO" id="GO:0005829">
    <property type="term" value="C:cytosol"/>
    <property type="evidence" value="ECO:0007669"/>
    <property type="project" value="UniProtKB-SubCell"/>
</dbReference>
<dbReference type="GO" id="GO:0044781">
    <property type="term" value="P:bacterial-type flagellum organization"/>
    <property type="evidence" value="ECO:0007669"/>
    <property type="project" value="UniProtKB-KW"/>
</dbReference>
<dbReference type="GO" id="GO:1902209">
    <property type="term" value="P:negative regulation of bacterial-type flagellum assembly"/>
    <property type="evidence" value="ECO:0007669"/>
    <property type="project" value="UniProtKB-UniRule"/>
</dbReference>
<dbReference type="GO" id="GO:0006457">
    <property type="term" value="P:protein folding"/>
    <property type="evidence" value="ECO:0007669"/>
    <property type="project" value="UniProtKB-UniRule"/>
</dbReference>
<dbReference type="Gene3D" id="1.20.58.380">
    <property type="entry name" value="Flagellar protein flit"/>
    <property type="match status" value="1"/>
</dbReference>
<dbReference type="HAMAP" id="MF_01180">
    <property type="entry name" value="FliT"/>
    <property type="match status" value="1"/>
</dbReference>
<dbReference type="InterPro" id="IPR008622">
    <property type="entry name" value="FliT"/>
</dbReference>
<dbReference type="NCBIfam" id="NF007836">
    <property type="entry name" value="PRK10548.1"/>
    <property type="match status" value="1"/>
</dbReference>
<dbReference type="Pfam" id="PF05400">
    <property type="entry name" value="FliT"/>
    <property type="match status" value="1"/>
</dbReference>
<gene>
    <name evidence="1" type="primary">fliT</name>
    <name type="ordered locus">ECA1728</name>
</gene>
<feature type="chain" id="PRO_0000353875" description="Flagellar protein FliT">
    <location>
        <begin position="1"/>
        <end position="126"/>
    </location>
</feature>
<feature type="region of interest" description="Required for homodimerization" evidence="1">
    <location>
        <begin position="1"/>
        <end position="50"/>
    </location>
</feature>
<feature type="region of interest" description="FliD binding" evidence="1">
    <location>
        <begin position="60"/>
        <end position="98"/>
    </location>
</feature>
<keyword id="KW-1005">Bacterial flagellum biogenesis</keyword>
<keyword id="KW-0143">Chaperone</keyword>
<keyword id="KW-0963">Cytoplasm</keyword>
<keyword id="KW-1185">Reference proteome</keyword>
<keyword id="KW-0678">Repressor</keyword>
<keyword id="KW-0804">Transcription</keyword>
<keyword id="KW-0805">Transcription regulation</keyword>
<sequence length="126" mass="14500">MVSPHRLLKDYQQLLSLSQKILHLAISGQWDTLVEQEIVYVQSVEGLVNTPIPDEIDSVMRLHLRQILQEVMDNEAKVKQLLQKRMDELSSLMGQSLKQKSINATYSEFAGQRRLLDDPLPDETRS</sequence>
<proteinExistence type="inferred from homology"/>
<protein>
    <recommendedName>
        <fullName evidence="1">Flagellar protein FliT</fullName>
    </recommendedName>
</protein>
<comment type="function">
    <text evidence="1">Dual-function protein that regulates the transcription of class 2 flagellar operons and that also acts as an export chaperone for the filament-capping protein FliD. As a transcriptional regulator, acts as an anti-FlhDC factor; it directly binds FlhC, thus inhibiting the binding of the FlhC/FlhD complex to class 2 promoters, resulting in decreased expression of class 2 flagellar operons. As a chaperone, effects FliD transition to the membrane by preventing its premature polymerization, and by directing it to the export apparatus.</text>
</comment>
<comment type="subunit">
    <text evidence="1">Homodimer. Interacts with FliD and FlhC.</text>
</comment>
<comment type="subcellular location">
    <subcellularLocation>
        <location evidence="1">Cytoplasm</location>
        <location evidence="1">Cytosol</location>
    </subcellularLocation>
</comment>
<comment type="similarity">
    <text evidence="1">Belongs to the FliT family.</text>
</comment>
<reference key="1">
    <citation type="journal article" date="2004" name="Proc. Natl. Acad. Sci. U.S.A.">
        <title>Genome sequence of the enterobacterial phytopathogen Erwinia carotovora subsp. atroseptica and characterization of virulence factors.</title>
        <authorList>
            <person name="Bell K.S."/>
            <person name="Sebaihia M."/>
            <person name="Pritchard L."/>
            <person name="Holden M.T.G."/>
            <person name="Hyman L.J."/>
            <person name="Holeva M.C."/>
            <person name="Thomson N.R."/>
            <person name="Bentley S.D."/>
            <person name="Churcher L.J.C."/>
            <person name="Mungall K."/>
            <person name="Atkin R."/>
            <person name="Bason N."/>
            <person name="Brooks K."/>
            <person name="Chillingworth T."/>
            <person name="Clark K."/>
            <person name="Doggett J."/>
            <person name="Fraser A."/>
            <person name="Hance Z."/>
            <person name="Hauser H."/>
            <person name="Jagels K."/>
            <person name="Moule S."/>
            <person name="Norbertczak H."/>
            <person name="Ormond D."/>
            <person name="Price C."/>
            <person name="Quail M.A."/>
            <person name="Sanders M."/>
            <person name="Walker D."/>
            <person name="Whitehead S."/>
            <person name="Salmond G.P.C."/>
            <person name="Birch P.R.J."/>
            <person name="Parkhill J."/>
            <person name="Toth I.K."/>
        </authorList>
    </citation>
    <scope>NUCLEOTIDE SEQUENCE [LARGE SCALE GENOMIC DNA]</scope>
    <source>
        <strain>SCRI 1043 / ATCC BAA-672</strain>
    </source>
</reference>
<evidence type="ECO:0000255" key="1">
    <source>
        <dbReference type="HAMAP-Rule" id="MF_01180"/>
    </source>
</evidence>
<name>FLIT_PECAS</name>